<proteinExistence type="inferred from homology"/>
<keyword id="KW-0021">Allosteric enzyme</keyword>
<keyword id="KW-0963">Cytoplasm</keyword>
<keyword id="KW-0520">NAD</keyword>
<keyword id="KW-0560">Oxidoreductase</keyword>
<keyword id="KW-0597">Phosphoprotein</keyword>
<reference key="1">
    <citation type="journal article" date="1990" name="Biol. Chem. Hoppe-Seyler">
        <title>Structure and function of L-lactate dehydrogenases from thermophilic, mesophilic and psychrophilic bacteria, IX. Identification, isolation and nucleotide sequence of two L-lactate dehydrogenase genes of the psychrophilic bacterium Bacillus psychrosaccharolyticus.</title>
        <authorList>
            <person name="Vckovski V."/>
            <person name="Schlatter D."/>
            <person name="Zuber H."/>
        </authorList>
    </citation>
    <scope>NUCLEOTIDE SEQUENCE [GENOMIC DNA]</scope>
</reference>
<comment type="function">
    <text evidence="1">Catalyzes the conversion of lactate to pyruvate.</text>
</comment>
<comment type="catalytic activity">
    <reaction evidence="1">
        <text>(S)-lactate + NAD(+) = pyruvate + NADH + H(+)</text>
        <dbReference type="Rhea" id="RHEA:23444"/>
        <dbReference type="ChEBI" id="CHEBI:15361"/>
        <dbReference type="ChEBI" id="CHEBI:15378"/>
        <dbReference type="ChEBI" id="CHEBI:16651"/>
        <dbReference type="ChEBI" id="CHEBI:57540"/>
        <dbReference type="ChEBI" id="CHEBI:57945"/>
        <dbReference type="EC" id="1.1.1.27"/>
    </reaction>
</comment>
<comment type="activity regulation">
    <text evidence="1">Allosterically activated by fructose 1,6-bisphosphate (FBP).</text>
</comment>
<comment type="pathway">
    <text evidence="1">Fermentation; pyruvate fermentation to lactate; (S)-lactate from pyruvate: step 1/1.</text>
</comment>
<comment type="subunit">
    <text evidence="1">Homotetramer.</text>
</comment>
<comment type="subcellular location">
    <subcellularLocation>
        <location evidence="1">Cytoplasm</location>
    </subcellularLocation>
</comment>
<comment type="similarity">
    <text evidence="1 3">Belongs to the LDH/MDH superfamily. LDH family.</text>
</comment>
<evidence type="ECO:0000255" key="1">
    <source>
        <dbReference type="HAMAP-Rule" id="MF_00488"/>
    </source>
</evidence>
<evidence type="ECO:0000303" key="2">
    <source>
    </source>
</evidence>
<evidence type="ECO:0000305" key="3"/>
<gene>
    <name evidence="1" type="primary">ldh2</name>
    <name type="synonym">lctB</name>
    <name evidence="2" type="synonym">ldhX</name>
</gene>
<sequence length="319" mass="35312">MIQRNINRVALIGAGSVGSSYAFALLNQSITEELVIIDVNEDKAMGDAMDLNHGKIFAPNPTKTWYGNYDDCKEADIVCICAGANQKPGETRLDLVEKNLKIFKSLVDQVMASGFDGIFLIATNPVDILTYATWKFSGLPKERVIGSGTILDSGRFRFLLGEYFDIAPANVHAHIIGEHGDTELPVWSHADIGGVPVEELITRNPEYKMEDLDQLFVNVRDAAYHIIKKKGATYYGIAMGLARITKAILNNENSVLTVSTYLDGEYGEKDVYIGVPAVVNRTGIREILELTLSETEQKQFTHSSTVLKEILNPHFKEAR</sequence>
<name>LDH2_PERPY</name>
<dbReference type="EC" id="1.1.1.27" evidence="1"/>
<dbReference type="EMBL" id="X55119">
    <property type="protein sequence ID" value="CAA38915.2"/>
    <property type="molecule type" value="Genomic_DNA"/>
</dbReference>
<dbReference type="PIR" id="S08183">
    <property type="entry name" value="S08183"/>
</dbReference>
<dbReference type="RefSeq" id="WP_040373302.1">
    <property type="nucleotide sequence ID" value="NZ_JARSPG010000014.1"/>
</dbReference>
<dbReference type="SMR" id="P20619"/>
<dbReference type="UniPathway" id="UPA00554">
    <property type="reaction ID" value="UER00611"/>
</dbReference>
<dbReference type="GO" id="GO:0005737">
    <property type="term" value="C:cytoplasm"/>
    <property type="evidence" value="ECO:0007669"/>
    <property type="project" value="UniProtKB-SubCell"/>
</dbReference>
<dbReference type="GO" id="GO:0004459">
    <property type="term" value="F:L-lactate dehydrogenase activity"/>
    <property type="evidence" value="ECO:0007669"/>
    <property type="project" value="UniProtKB-UniRule"/>
</dbReference>
<dbReference type="GO" id="GO:0006096">
    <property type="term" value="P:glycolytic process"/>
    <property type="evidence" value="ECO:0007669"/>
    <property type="project" value="UniProtKB-UniRule"/>
</dbReference>
<dbReference type="GO" id="GO:0006089">
    <property type="term" value="P:lactate metabolic process"/>
    <property type="evidence" value="ECO:0007669"/>
    <property type="project" value="TreeGrafter"/>
</dbReference>
<dbReference type="CDD" id="cd05291">
    <property type="entry name" value="HicDH_like"/>
    <property type="match status" value="1"/>
</dbReference>
<dbReference type="FunFam" id="3.40.50.720:FF:000018">
    <property type="entry name" value="Malate dehydrogenase"/>
    <property type="match status" value="1"/>
</dbReference>
<dbReference type="Gene3D" id="3.90.110.10">
    <property type="entry name" value="Lactate dehydrogenase/glycoside hydrolase, family 4, C-terminal"/>
    <property type="match status" value="1"/>
</dbReference>
<dbReference type="Gene3D" id="3.40.50.720">
    <property type="entry name" value="NAD(P)-binding Rossmann-like Domain"/>
    <property type="match status" value="1"/>
</dbReference>
<dbReference type="HAMAP" id="MF_00488">
    <property type="entry name" value="Lactate_dehydrog"/>
    <property type="match status" value="1"/>
</dbReference>
<dbReference type="InterPro" id="IPR001557">
    <property type="entry name" value="L-lactate/malate_DH"/>
</dbReference>
<dbReference type="InterPro" id="IPR011304">
    <property type="entry name" value="L-lactate_DH"/>
</dbReference>
<dbReference type="InterPro" id="IPR018177">
    <property type="entry name" value="L-lactate_DH_AS"/>
</dbReference>
<dbReference type="InterPro" id="IPR022383">
    <property type="entry name" value="Lactate/malate_DH_C"/>
</dbReference>
<dbReference type="InterPro" id="IPR001236">
    <property type="entry name" value="Lactate/malate_DH_N"/>
</dbReference>
<dbReference type="InterPro" id="IPR015955">
    <property type="entry name" value="Lactate_DH/Glyco_Ohase_4_C"/>
</dbReference>
<dbReference type="InterPro" id="IPR036291">
    <property type="entry name" value="NAD(P)-bd_dom_sf"/>
</dbReference>
<dbReference type="NCBIfam" id="TIGR01771">
    <property type="entry name" value="L-LDH-NAD"/>
    <property type="match status" value="1"/>
</dbReference>
<dbReference type="NCBIfam" id="NF000824">
    <property type="entry name" value="PRK00066.1"/>
    <property type="match status" value="1"/>
</dbReference>
<dbReference type="NCBIfam" id="NF004863">
    <property type="entry name" value="PRK06223.1"/>
    <property type="match status" value="1"/>
</dbReference>
<dbReference type="PANTHER" id="PTHR43128">
    <property type="entry name" value="L-2-HYDROXYCARBOXYLATE DEHYDROGENASE (NAD(P)(+))"/>
    <property type="match status" value="1"/>
</dbReference>
<dbReference type="PANTHER" id="PTHR43128:SF16">
    <property type="entry name" value="L-LACTATE DEHYDROGENASE"/>
    <property type="match status" value="1"/>
</dbReference>
<dbReference type="Pfam" id="PF02866">
    <property type="entry name" value="Ldh_1_C"/>
    <property type="match status" value="1"/>
</dbReference>
<dbReference type="Pfam" id="PF00056">
    <property type="entry name" value="Ldh_1_N"/>
    <property type="match status" value="1"/>
</dbReference>
<dbReference type="PIRSF" id="PIRSF000102">
    <property type="entry name" value="Lac_mal_DH"/>
    <property type="match status" value="1"/>
</dbReference>
<dbReference type="PRINTS" id="PR00086">
    <property type="entry name" value="LLDHDRGNASE"/>
</dbReference>
<dbReference type="SUPFAM" id="SSF56327">
    <property type="entry name" value="LDH C-terminal domain-like"/>
    <property type="match status" value="1"/>
</dbReference>
<dbReference type="SUPFAM" id="SSF51735">
    <property type="entry name" value="NAD(P)-binding Rossmann-fold domains"/>
    <property type="match status" value="1"/>
</dbReference>
<dbReference type="PROSITE" id="PS00064">
    <property type="entry name" value="L_LDH"/>
    <property type="match status" value="1"/>
</dbReference>
<organism>
    <name type="scientific">Peribacillus psychrosaccharolyticus</name>
    <name type="common">Bacillus psychrosaccharolyticus</name>
    <dbReference type="NCBI Taxonomy" id="1407"/>
    <lineage>
        <taxon>Bacteria</taxon>
        <taxon>Bacillati</taxon>
        <taxon>Bacillota</taxon>
        <taxon>Bacilli</taxon>
        <taxon>Bacillales</taxon>
        <taxon>Bacillaceae</taxon>
        <taxon>Peribacillus</taxon>
    </lineage>
</organism>
<accession>P20619</accession>
<feature type="chain" id="PRO_0000168327" description="L-lactate dehydrogenase 2">
    <location>
        <begin position="1"/>
        <end position="319"/>
    </location>
</feature>
<feature type="active site" description="Proton acceptor" evidence="1">
    <location>
        <position position="179"/>
    </location>
</feature>
<feature type="binding site" evidence="1">
    <location>
        <position position="17"/>
    </location>
    <ligand>
        <name>NAD(+)</name>
        <dbReference type="ChEBI" id="CHEBI:57540"/>
    </ligand>
</feature>
<feature type="binding site" evidence="1">
    <location>
        <position position="38"/>
    </location>
    <ligand>
        <name>NAD(+)</name>
        <dbReference type="ChEBI" id="CHEBI:57540"/>
    </ligand>
</feature>
<feature type="binding site" evidence="1">
    <location>
        <position position="43"/>
    </location>
    <ligand>
        <name>NAD(+)</name>
        <dbReference type="ChEBI" id="CHEBI:57540"/>
    </ligand>
</feature>
<feature type="binding site" evidence="1">
    <location>
        <position position="69"/>
    </location>
    <ligand>
        <name>NAD(+)</name>
        <dbReference type="ChEBI" id="CHEBI:57540"/>
    </ligand>
</feature>
<feature type="binding site" evidence="1">
    <location>
        <begin position="83"/>
        <end position="84"/>
    </location>
    <ligand>
        <name>NAD(+)</name>
        <dbReference type="ChEBI" id="CHEBI:57540"/>
    </ligand>
</feature>
<feature type="binding site" evidence="1">
    <location>
        <position position="86"/>
    </location>
    <ligand>
        <name>substrate</name>
    </ligand>
</feature>
<feature type="binding site" evidence="1">
    <location>
        <position position="92"/>
    </location>
    <ligand>
        <name>substrate</name>
    </ligand>
</feature>
<feature type="binding site" evidence="1">
    <location>
        <position position="105"/>
    </location>
    <ligand>
        <name>NAD(+)</name>
        <dbReference type="ChEBI" id="CHEBI:57540"/>
    </ligand>
</feature>
<feature type="binding site" evidence="1">
    <location>
        <begin position="122"/>
        <end position="124"/>
    </location>
    <ligand>
        <name>NAD(+)</name>
        <dbReference type="ChEBI" id="CHEBI:57540"/>
    </ligand>
</feature>
<feature type="binding site" evidence="1">
    <location>
        <begin position="124"/>
        <end position="127"/>
    </location>
    <ligand>
        <name>substrate</name>
    </ligand>
</feature>
<feature type="binding site" evidence="1">
    <location>
        <position position="147"/>
    </location>
    <ligand>
        <name>NAD(+)</name>
        <dbReference type="ChEBI" id="CHEBI:57540"/>
    </ligand>
</feature>
<feature type="binding site" evidence="1">
    <location>
        <begin position="152"/>
        <end position="155"/>
    </location>
    <ligand>
        <name>substrate</name>
    </ligand>
</feature>
<feature type="binding site" evidence="1">
    <location>
        <position position="157"/>
    </location>
    <ligand>
        <name>beta-D-fructose 1,6-bisphosphate</name>
        <dbReference type="ChEBI" id="CHEBI:32966"/>
        <note>allosteric activator</note>
    </ligand>
</feature>
<feature type="binding site" evidence="1">
    <location>
        <position position="172"/>
    </location>
    <ligand>
        <name>beta-D-fructose 1,6-bisphosphate</name>
        <dbReference type="ChEBI" id="CHEBI:32966"/>
        <note>allosteric activator</note>
    </ligand>
</feature>
<feature type="binding site" evidence="1">
    <location>
        <position position="233"/>
    </location>
    <ligand>
        <name>substrate</name>
    </ligand>
</feature>
<feature type="modified residue" description="Phosphotyrosine" evidence="1">
    <location>
        <position position="224"/>
    </location>
</feature>
<protein>
    <recommendedName>
        <fullName evidence="1">L-lactate dehydrogenase 2</fullName>
        <shortName evidence="1">L-LDH 2</shortName>
        <ecNumber evidence="1">1.1.1.27</ecNumber>
    </recommendedName>
    <alternativeName>
        <fullName evidence="2">L-lactate dehydrogenase X</fullName>
        <shortName evidence="2">L-LDH X</shortName>
    </alternativeName>
</protein>